<protein>
    <recommendedName>
        <fullName evidence="1">tRNA pseudouridine synthase B</fullName>
        <ecNumber evidence="1">5.4.99.25</ecNumber>
    </recommendedName>
    <alternativeName>
        <fullName evidence="1">tRNA pseudouridine(55) synthase</fullName>
        <shortName evidence="1">Psi55 synthase</shortName>
    </alternativeName>
    <alternativeName>
        <fullName evidence="1">tRNA pseudouridylate synthase</fullName>
    </alternativeName>
    <alternativeName>
        <fullName evidence="1">tRNA-uridine isomerase</fullName>
    </alternativeName>
</protein>
<feature type="chain" id="PRO_1000084563" description="tRNA pseudouridine synthase B">
    <location>
        <begin position="1"/>
        <end position="273"/>
    </location>
</feature>
<feature type="active site" description="Nucleophile" evidence="1">
    <location>
        <position position="38"/>
    </location>
</feature>
<evidence type="ECO:0000255" key="1">
    <source>
        <dbReference type="HAMAP-Rule" id="MF_01080"/>
    </source>
</evidence>
<organism>
    <name type="scientific">Campylobacter curvus (strain 525.92)</name>
    <dbReference type="NCBI Taxonomy" id="360105"/>
    <lineage>
        <taxon>Bacteria</taxon>
        <taxon>Pseudomonadati</taxon>
        <taxon>Campylobacterota</taxon>
        <taxon>Epsilonproteobacteria</taxon>
        <taxon>Campylobacterales</taxon>
        <taxon>Campylobacteraceae</taxon>
        <taxon>Campylobacter</taxon>
    </lineage>
</organism>
<sequence length="273" mass="31088">MNAIFVANKPTGLSSNQFLNRLKRKYGVKKAGFSGTLDPFASGCLIVAFGSYTKFFRFLDKTPKIYEATMWIGASSPSGDNENITDVKILKPFADESLEIARKSLLGRLKYIPPKFSAKNINGTRAYKLARTGEEFSLKEQEMEVFSCEILSYRHPFLTFRISLSEGGYVRSYAQLFGKRLGYDVCLSELKRISEGKFRFENEKFLNICEILNLPRNKYLGDVADIMDGKSLKPSDFTTQKDGIYLLEYDKFLSIIEIKNDTISYCLNKVEKC</sequence>
<reference key="1">
    <citation type="submission" date="2007-07" db="EMBL/GenBank/DDBJ databases">
        <title>Genome sequence of Campylobacter curvus 525.92 isolated from human feces.</title>
        <authorList>
            <person name="Fouts D.E."/>
            <person name="Mongodin E.F."/>
            <person name="Puiu D."/>
            <person name="Sebastian Y."/>
            <person name="Miller W.G."/>
            <person name="Mandrell R.E."/>
            <person name="Lastovica A.J."/>
            <person name="Nelson K.E."/>
        </authorList>
    </citation>
    <scope>NUCLEOTIDE SEQUENCE [LARGE SCALE GENOMIC DNA]</scope>
    <source>
        <strain>525.92</strain>
    </source>
</reference>
<accession>A7GZ93</accession>
<comment type="function">
    <text evidence="1">Responsible for synthesis of pseudouridine from uracil-55 in the psi GC loop of transfer RNAs.</text>
</comment>
<comment type="catalytic activity">
    <reaction evidence="1">
        <text>uridine(55) in tRNA = pseudouridine(55) in tRNA</text>
        <dbReference type="Rhea" id="RHEA:42532"/>
        <dbReference type="Rhea" id="RHEA-COMP:10101"/>
        <dbReference type="Rhea" id="RHEA-COMP:10102"/>
        <dbReference type="ChEBI" id="CHEBI:65314"/>
        <dbReference type="ChEBI" id="CHEBI:65315"/>
        <dbReference type="EC" id="5.4.99.25"/>
    </reaction>
</comment>
<comment type="similarity">
    <text evidence="1">Belongs to the pseudouridine synthase TruB family. Type 1 subfamily.</text>
</comment>
<name>TRUB_CAMC5</name>
<keyword id="KW-0413">Isomerase</keyword>
<keyword id="KW-1185">Reference proteome</keyword>
<keyword id="KW-0819">tRNA processing</keyword>
<gene>
    <name evidence="1" type="primary">truB</name>
    <name type="ordered locus">Ccur92_12310</name>
    <name type="ORF">CCV52592_0698</name>
</gene>
<dbReference type="EC" id="5.4.99.25" evidence="1"/>
<dbReference type="EMBL" id="CP000767">
    <property type="protein sequence ID" value="EAU00379.1"/>
    <property type="molecule type" value="Genomic_DNA"/>
</dbReference>
<dbReference type="RefSeq" id="WP_011992466.1">
    <property type="nucleotide sequence ID" value="NC_009715.2"/>
</dbReference>
<dbReference type="SMR" id="A7GZ93"/>
<dbReference type="STRING" id="360105.CCV52592_0698"/>
<dbReference type="KEGG" id="ccv:CCV52592_0698"/>
<dbReference type="HOGENOM" id="CLU_032087_2_0_7"/>
<dbReference type="OrthoDB" id="9802309at2"/>
<dbReference type="Proteomes" id="UP000006380">
    <property type="component" value="Chromosome"/>
</dbReference>
<dbReference type="GO" id="GO:0003723">
    <property type="term" value="F:RNA binding"/>
    <property type="evidence" value="ECO:0007669"/>
    <property type="project" value="InterPro"/>
</dbReference>
<dbReference type="GO" id="GO:0160148">
    <property type="term" value="F:tRNA pseudouridine(55) synthase activity"/>
    <property type="evidence" value="ECO:0007669"/>
    <property type="project" value="UniProtKB-EC"/>
</dbReference>
<dbReference type="GO" id="GO:1990481">
    <property type="term" value="P:mRNA pseudouridine synthesis"/>
    <property type="evidence" value="ECO:0007669"/>
    <property type="project" value="TreeGrafter"/>
</dbReference>
<dbReference type="GO" id="GO:0031119">
    <property type="term" value="P:tRNA pseudouridine synthesis"/>
    <property type="evidence" value="ECO:0007669"/>
    <property type="project" value="UniProtKB-UniRule"/>
</dbReference>
<dbReference type="Gene3D" id="3.30.2350.10">
    <property type="entry name" value="Pseudouridine synthase"/>
    <property type="match status" value="1"/>
</dbReference>
<dbReference type="HAMAP" id="MF_01080">
    <property type="entry name" value="TruB_bact"/>
    <property type="match status" value="1"/>
</dbReference>
<dbReference type="InterPro" id="IPR020103">
    <property type="entry name" value="PsdUridine_synth_cat_dom_sf"/>
</dbReference>
<dbReference type="InterPro" id="IPR002501">
    <property type="entry name" value="PsdUridine_synth_N"/>
</dbReference>
<dbReference type="InterPro" id="IPR014780">
    <property type="entry name" value="tRNA_psdUridine_synth_TruB"/>
</dbReference>
<dbReference type="NCBIfam" id="TIGR00431">
    <property type="entry name" value="TruB"/>
    <property type="match status" value="1"/>
</dbReference>
<dbReference type="PANTHER" id="PTHR13767:SF2">
    <property type="entry name" value="PSEUDOURIDYLATE SYNTHASE TRUB1"/>
    <property type="match status" value="1"/>
</dbReference>
<dbReference type="PANTHER" id="PTHR13767">
    <property type="entry name" value="TRNA-PSEUDOURIDINE SYNTHASE"/>
    <property type="match status" value="1"/>
</dbReference>
<dbReference type="Pfam" id="PF01509">
    <property type="entry name" value="TruB_N"/>
    <property type="match status" value="1"/>
</dbReference>
<dbReference type="SUPFAM" id="SSF55120">
    <property type="entry name" value="Pseudouridine synthase"/>
    <property type="match status" value="1"/>
</dbReference>
<proteinExistence type="inferred from homology"/>